<gene>
    <name type="primary">AEE22</name>
    <name type="ordered locus">At1g68270</name>
    <name type="ORF">T22E19.10</name>
</gene>
<dbReference type="EC" id="6.2.1.-"/>
<dbReference type="EMBL" id="AC016447">
    <property type="protein sequence ID" value="AAG52596.1"/>
    <property type="molecule type" value="Genomic_DNA"/>
</dbReference>
<dbReference type="EMBL" id="CP002684">
    <property type="protein sequence ID" value="AEE34775.1"/>
    <property type="molecule type" value="Genomic_DNA"/>
</dbReference>
<dbReference type="PIR" id="C96706">
    <property type="entry name" value="C96706"/>
</dbReference>
<dbReference type="RefSeq" id="NP_176994.1">
    <property type="nucleotide sequence ID" value="NM_105498.1"/>
</dbReference>
<dbReference type="SMR" id="Q9C9G2"/>
<dbReference type="FunCoup" id="Q9C9G2">
    <property type="interactions" value="89"/>
</dbReference>
<dbReference type="STRING" id="3702.Q9C9G2"/>
<dbReference type="iPTMnet" id="Q9C9G2"/>
<dbReference type="PaxDb" id="3702-AT1G68270.1"/>
<dbReference type="EnsemblPlants" id="AT1G68270.1">
    <property type="protein sequence ID" value="AT1G68270.1"/>
    <property type="gene ID" value="AT1G68270"/>
</dbReference>
<dbReference type="GeneID" id="843156"/>
<dbReference type="Gramene" id="AT1G68270.1">
    <property type="protein sequence ID" value="AT1G68270.1"/>
    <property type="gene ID" value="AT1G68270"/>
</dbReference>
<dbReference type="KEGG" id="ath:AT1G68270"/>
<dbReference type="Araport" id="AT1G68270"/>
<dbReference type="TAIR" id="AT1G68270"/>
<dbReference type="eggNOG" id="KOG1176">
    <property type="taxonomic scope" value="Eukaryota"/>
</dbReference>
<dbReference type="HOGENOM" id="CLU_000022_59_5_1"/>
<dbReference type="InParanoid" id="Q9C9G2"/>
<dbReference type="OMA" id="THNSIHA"/>
<dbReference type="PhylomeDB" id="Q9C9G2"/>
<dbReference type="BioCyc" id="ARA:AT1G68270-MONOMER"/>
<dbReference type="PRO" id="PR:Q9C9G2"/>
<dbReference type="Proteomes" id="UP000006548">
    <property type="component" value="Chromosome 1"/>
</dbReference>
<dbReference type="ExpressionAtlas" id="Q9C9G2">
    <property type="expression patterns" value="differential"/>
</dbReference>
<dbReference type="GO" id="GO:0016874">
    <property type="term" value="F:ligase activity"/>
    <property type="evidence" value="ECO:0007669"/>
    <property type="project" value="UniProtKB-KW"/>
</dbReference>
<dbReference type="GO" id="GO:0006631">
    <property type="term" value="P:fatty acid metabolic process"/>
    <property type="evidence" value="ECO:0007669"/>
    <property type="project" value="UniProtKB-KW"/>
</dbReference>
<dbReference type="FunFam" id="3.30.300.30:FF:000008">
    <property type="entry name" value="2,3-dihydroxybenzoate-AMP ligase"/>
    <property type="match status" value="1"/>
</dbReference>
<dbReference type="Gene3D" id="3.30.300.30">
    <property type="match status" value="1"/>
</dbReference>
<dbReference type="Gene3D" id="3.40.50.12780">
    <property type="entry name" value="N-terminal domain of ligase-like"/>
    <property type="match status" value="2"/>
</dbReference>
<dbReference type="InterPro" id="IPR025110">
    <property type="entry name" value="AMP-bd_C"/>
</dbReference>
<dbReference type="InterPro" id="IPR045851">
    <property type="entry name" value="AMP-bd_C_sf"/>
</dbReference>
<dbReference type="InterPro" id="IPR000873">
    <property type="entry name" value="AMP-dep_synth/lig_dom"/>
</dbReference>
<dbReference type="InterPro" id="IPR042099">
    <property type="entry name" value="ANL_N_sf"/>
</dbReference>
<dbReference type="PANTHER" id="PTHR43859">
    <property type="entry name" value="ACYL-ACTIVATING ENZYME"/>
    <property type="match status" value="1"/>
</dbReference>
<dbReference type="PANTHER" id="PTHR43859:SF25">
    <property type="entry name" value="BENZOATE--COA LIGASE, PEROXISOMAL-RELATED"/>
    <property type="match status" value="1"/>
</dbReference>
<dbReference type="Pfam" id="PF00501">
    <property type="entry name" value="AMP-binding"/>
    <property type="match status" value="2"/>
</dbReference>
<dbReference type="Pfam" id="PF13193">
    <property type="entry name" value="AMP-binding_C"/>
    <property type="match status" value="1"/>
</dbReference>
<dbReference type="SUPFAM" id="SSF56801">
    <property type="entry name" value="Acetyl-CoA synthetase-like"/>
    <property type="match status" value="1"/>
</dbReference>
<organism>
    <name type="scientific">Arabidopsis thaliana</name>
    <name type="common">Mouse-ear cress</name>
    <dbReference type="NCBI Taxonomy" id="3702"/>
    <lineage>
        <taxon>Eukaryota</taxon>
        <taxon>Viridiplantae</taxon>
        <taxon>Streptophyta</taxon>
        <taxon>Embryophyta</taxon>
        <taxon>Tracheophyta</taxon>
        <taxon>Spermatophyta</taxon>
        <taxon>Magnoliopsida</taxon>
        <taxon>eudicotyledons</taxon>
        <taxon>Gunneridae</taxon>
        <taxon>Pentapetalae</taxon>
        <taxon>rosids</taxon>
        <taxon>malvids</taxon>
        <taxon>Brassicales</taxon>
        <taxon>Brassicaceae</taxon>
        <taxon>Camelineae</taxon>
        <taxon>Arabidopsis</taxon>
    </lineage>
</organism>
<comment type="function">
    <text evidence="1">May act as an acid--thiol ligase that activates carboxylic acids by forming acyl-CoAs.</text>
</comment>
<comment type="similarity">
    <text evidence="2">Belongs to the ATP-dependent AMP-binding enzyme family.</text>
</comment>
<name>AEE22_ARATH</name>
<reference key="1">
    <citation type="journal article" date="2000" name="Nature">
        <title>Sequence and analysis of chromosome 1 of the plant Arabidopsis thaliana.</title>
        <authorList>
            <person name="Theologis A."/>
            <person name="Ecker J.R."/>
            <person name="Palm C.J."/>
            <person name="Federspiel N.A."/>
            <person name="Kaul S."/>
            <person name="White O."/>
            <person name="Alonso J."/>
            <person name="Altafi H."/>
            <person name="Araujo R."/>
            <person name="Bowman C.L."/>
            <person name="Brooks S.Y."/>
            <person name="Buehler E."/>
            <person name="Chan A."/>
            <person name="Chao Q."/>
            <person name="Chen H."/>
            <person name="Cheuk R.F."/>
            <person name="Chin C.W."/>
            <person name="Chung M.K."/>
            <person name="Conn L."/>
            <person name="Conway A.B."/>
            <person name="Conway A.R."/>
            <person name="Creasy T.H."/>
            <person name="Dewar K."/>
            <person name="Dunn P."/>
            <person name="Etgu P."/>
            <person name="Feldblyum T.V."/>
            <person name="Feng J.-D."/>
            <person name="Fong B."/>
            <person name="Fujii C.Y."/>
            <person name="Gill J.E."/>
            <person name="Goldsmith A.D."/>
            <person name="Haas B."/>
            <person name="Hansen N.F."/>
            <person name="Hughes B."/>
            <person name="Huizar L."/>
            <person name="Hunter J.L."/>
            <person name="Jenkins J."/>
            <person name="Johnson-Hopson C."/>
            <person name="Khan S."/>
            <person name="Khaykin E."/>
            <person name="Kim C.J."/>
            <person name="Koo H.L."/>
            <person name="Kremenetskaia I."/>
            <person name="Kurtz D.B."/>
            <person name="Kwan A."/>
            <person name="Lam B."/>
            <person name="Langin-Hooper S."/>
            <person name="Lee A."/>
            <person name="Lee J.M."/>
            <person name="Lenz C.A."/>
            <person name="Li J.H."/>
            <person name="Li Y.-P."/>
            <person name="Lin X."/>
            <person name="Liu S.X."/>
            <person name="Liu Z.A."/>
            <person name="Luros J.S."/>
            <person name="Maiti R."/>
            <person name="Marziali A."/>
            <person name="Militscher J."/>
            <person name="Miranda M."/>
            <person name="Nguyen M."/>
            <person name="Nierman W.C."/>
            <person name="Osborne B.I."/>
            <person name="Pai G."/>
            <person name="Peterson J."/>
            <person name="Pham P.K."/>
            <person name="Rizzo M."/>
            <person name="Rooney T."/>
            <person name="Rowley D."/>
            <person name="Sakano H."/>
            <person name="Salzberg S.L."/>
            <person name="Schwartz J.R."/>
            <person name="Shinn P."/>
            <person name="Southwick A.M."/>
            <person name="Sun H."/>
            <person name="Tallon L.J."/>
            <person name="Tambunga G."/>
            <person name="Toriumi M.J."/>
            <person name="Town C.D."/>
            <person name="Utterback T."/>
            <person name="Van Aken S."/>
            <person name="Vaysberg M."/>
            <person name="Vysotskaia V.S."/>
            <person name="Walker M."/>
            <person name="Wu D."/>
            <person name="Yu G."/>
            <person name="Fraser C.M."/>
            <person name="Venter J.C."/>
            <person name="Davis R.W."/>
        </authorList>
    </citation>
    <scope>NUCLEOTIDE SEQUENCE [LARGE SCALE GENOMIC DNA]</scope>
    <source>
        <strain>cv. Columbia</strain>
    </source>
</reference>
<reference key="2">
    <citation type="journal article" date="2017" name="Plant J.">
        <title>Araport11: a complete reannotation of the Arabidopsis thaliana reference genome.</title>
        <authorList>
            <person name="Cheng C.Y."/>
            <person name="Krishnakumar V."/>
            <person name="Chan A.P."/>
            <person name="Thibaud-Nissen F."/>
            <person name="Schobel S."/>
            <person name="Town C.D."/>
        </authorList>
    </citation>
    <scope>GENOME REANNOTATION</scope>
    <source>
        <strain>cv. Columbia</strain>
    </source>
</reference>
<reference key="3">
    <citation type="journal article" date="2003" name="Plant Physiol.">
        <title>Arabidopsis contains a large superfamily of acyl-activating enzymes. Phylogenetic and biochemical analysis reveals a new class of acyl-coenzyme a synthetases.</title>
        <authorList>
            <person name="Shockey J.M."/>
            <person name="Fulda M.S."/>
            <person name="Browse J."/>
        </authorList>
    </citation>
    <scope>GENE FAMILY</scope>
</reference>
<evidence type="ECO:0000250" key="1"/>
<evidence type="ECO:0000305" key="2"/>
<protein>
    <recommendedName>
        <fullName>Probable acyl-activating enzyme 22</fullName>
        <ecNumber>6.2.1.-</ecNumber>
    </recommendedName>
</protein>
<proteinExistence type="inferred from homology"/>
<feature type="chain" id="PRO_0000415732" description="Probable acyl-activating enzyme 22">
    <location>
        <begin position="1"/>
        <end position="535"/>
    </location>
</feature>
<sequence length="535" mass="60209">MDNMELCEANNVPLTPITFLKRASECYPNRTSIIYGQTRFTWPQTYDRCCRLAASLISLNIAKNDVVSVVAPNTPAIYEMHFAVPMAGAVLNPINTRLDATSITTILRHAQPKILFIHRNFEPLAREILHLLSCDDLQLNLLVIFIDEYNSAKRVSSEELDYESLIQMGEPTSPLVENMFRIQNEQDPISLNYTSGTTADPKGVVISHRGAYLTSLGVIIGWEMSTCPVYLWIFAYVSLQWMDVYMGNSSARGHQCVYEPRNPLDMSHRSGPVHLMTGGSPLPAALVKKVQRLGFQVLHVYGLTEATGPALFCEWQDEWNRLTENQQMELKARQGLGILSVAEVDVKYNETQESVPHDGKTMGEIVMKGNNIMKGYLKNSKATFEAFKHGWLNTGDVGVIHPDGHIEIKDRSKDIIISGGENISSVEVENILYKHPRVFEVAVVAMPHRVWGETPCAFIVLQKGETNKEDDEYKFVAREKELIDYCRENLPHFMCPRKVVFLEELPKNGNGKILKPNLRAITKGLVAEDEANVIS</sequence>
<keyword id="KW-0276">Fatty acid metabolism</keyword>
<keyword id="KW-0436">Ligase</keyword>
<keyword id="KW-0443">Lipid metabolism</keyword>
<keyword id="KW-1185">Reference proteome</keyword>
<accession>Q9C9G2</accession>